<accession>B4S9U6</accession>
<feature type="chain" id="PRO_1000097877" description="Arginine repressor">
    <location>
        <begin position="1"/>
        <end position="148"/>
    </location>
</feature>
<reference key="1">
    <citation type="submission" date="2008-06" db="EMBL/GenBank/DDBJ databases">
        <title>Complete sequence of Pelodictyon phaeoclathratiforme BU-1.</title>
        <authorList>
            <consortium name="US DOE Joint Genome Institute"/>
            <person name="Lucas S."/>
            <person name="Copeland A."/>
            <person name="Lapidus A."/>
            <person name="Glavina del Rio T."/>
            <person name="Dalin E."/>
            <person name="Tice H."/>
            <person name="Bruce D."/>
            <person name="Goodwin L."/>
            <person name="Pitluck S."/>
            <person name="Schmutz J."/>
            <person name="Larimer F."/>
            <person name="Land M."/>
            <person name="Hauser L."/>
            <person name="Kyrpides N."/>
            <person name="Mikhailova N."/>
            <person name="Liu Z."/>
            <person name="Li T."/>
            <person name="Zhao F."/>
            <person name="Overmann J."/>
            <person name="Bryant D.A."/>
            <person name="Richardson P."/>
        </authorList>
    </citation>
    <scope>NUCLEOTIDE SEQUENCE [LARGE SCALE GENOMIC DNA]</scope>
    <source>
        <strain>DSM 5477 / BU-1</strain>
    </source>
</reference>
<sequence>MNKYARQLKIREILHQNSVGNQHDLLQLLHDSGMRVAQATLSRDCAELGIIRSRTNGNFKMLLPDDDPDKIIKGLVGVEVLSVNANETSIIIMTLPGRAHGVGSWLDQLKSPLILGTIAGDDTVLVIPSSVLNISALKSYIHKNLSKN</sequence>
<comment type="function">
    <text evidence="1">Regulates arginine biosynthesis genes.</text>
</comment>
<comment type="pathway">
    <text>Amino-acid biosynthesis; L-arginine biosynthesis [regulation].</text>
</comment>
<comment type="subcellular location">
    <subcellularLocation>
        <location evidence="1">Cytoplasm</location>
    </subcellularLocation>
</comment>
<comment type="similarity">
    <text evidence="1">Belongs to the ArgR family.</text>
</comment>
<organism>
    <name type="scientific">Pelodictyon phaeoclathratiforme (strain DSM 5477 / BU-1)</name>
    <dbReference type="NCBI Taxonomy" id="324925"/>
    <lineage>
        <taxon>Bacteria</taxon>
        <taxon>Pseudomonadati</taxon>
        <taxon>Chlorobiota</taxon>
        <taxon>Chlorobiia</taxon>
        <taxon>Chlorobiales</taxon>
        <taxon>Chlorobiaceae</taxon>
        <taxon>Chlorobium/Pelodictyon group</taxon>
        <taxon>Pelodictyon</taxon>
    </lineage>
</organism>
<protein>
    <recommendedName>
        <fullName evidence="1">Arginine repressor</fullName>
    </recommendedName>
</protein>
<proteinExistence type="inferred from homology"/>
<evidence type="ECO:0000255" key="1">
    <source>
        <dbReference type="HAMAP-Rule" id="MF_00173"/>
    </source>
</evidence>
<keyword id="KW-0028">Amino-acid biosynthesis</keyword>
<keyword id="KW-0055">Arginine biosynthesis</keyword>
<keyword id="KW-0963">Cytoplasm</keyword>
<keyword id="KW-0238">DNA-binding</keyword>
<keyword id="KW-1185">Reference proteome</keyword>
<keyword id="KW-0678">Repressor</keyword>
<keyword id="KW-0804">Transcription</keyword>
<keyword id="KW-0805">Transcription regulation</keyword>
<gene>
    <name evidence="1" type="primary">argR</name>
    <name type="ordered locus">Ppha_1379</name>
</gene>
<dbReference type="EMBL" id="CP001110">
    <property type="protein sequence ID" value="ACF43642.1"/>
    <property type="molecule type" value="Genomic_DNA"/>
</dbReference>
<dbReference type="RefSeq" id="WP_012508133.1">
    <property type="nucleotide sequence ID" value="NC_011060.1"/>
</dbReference>
<dbReference type="SMR" id="B4S9U6"/>
<dbReference type="STRING" id="324925.Ppha_1379"/>
<dbReference type="KEGG" id="pph:Ppha_1379"/>
<dbReference type="eggNOG" id="COG1438">
    <property type="taxonomic scope" value="Bacteria"/>
</dbReference>
<dbReference type="HOGENOM" id="CLU_097103_3_0_10"/>
<dbReference type="OrthoDB" id="9807089at2"/>
<dbReference type="UniPathway" id="UPA00068"/>
<dbReference type="Proteomes" id="UP000002724">
    <property type="component" value="Chromosome"/>
</dbReference>
<dbReference type="GO" id="GO:0005737">
    <property type="term" value="C:cytoplasm"/>
    <property type="evidence" value="ECO:0007669"/>
    <property type="project" value="UniProtKB-SubCell"/>
</dbReference>
<dbReference type="GO" id="GO:0034618">
    <property type="term" value="F:arginine binding"/>
    <property type="evidence" value="ECO:0007669"/>
    <property type="project" value="InterPro"/>
</dbReference>
<dbReference type="GO" id="GO:0003677">
    <property type="term" value="F:DNA binding"/>
    <property type="evidence" value="ECO:0007669"/>
    <property type="project" value="UniProtKB-KW"/>
</dbReference>
<dbReference type="GO" id="GO:0003700">
    <property type="term" value="F:DNA-binding transcription factor activity"/>
    <property type="evidence" value="ECO:0007669"/>
    <property type="project" value="UniProtKB-UniRule"/>
</dbReference>
<dbReference type="GO" id="GO:0006526">
    <property type="term" value="P:L-arginine biosynthetic process"/>
    <property type="evidence" value="ECO:0007669"/>
    <property type="project" value="UniProtKB-UniPathway"/>
</dbReference>
<dbReference type="GO" id="GO:0051259">
    <property type="term" value="P:protein complex oligomerization"/>
    <property type="evidence" value="ECO:0007669"/>
    <property type="project" value="InterPro"/>
</dbReference>
<dbReference type="GO" id="GO:1900079">
    <property type="term" value="P:regulation of arginine biosynthetic process"/>
    <property type="evidence" value="ECO:0007669"/>
    <property type="project" value="UniProtKB-UniRule"/>
</dbReference>
<dbReference type="Gene3D" id="3.30.1360.40">
    <property type="match status" value="1"/>
</dbReference>
<dbReference type="Gene3D" id="1.10.10.10">
    <property type="entry name" value="Winged helix-like DNA-binding domain superfamily/Winged helix DNA-binding domain"/>
    <property type="match status" value="1"/>
</dbReference>
<dbReference type="HAMAP" id="MF_00173">
    <property type="entry name" value="Arg_repressor"/>
    <property type="match status" value="1"/>
</dbReference>
<dbReference type="InterPro" id="IPR001669">
    <property type="entry name" value="Arg_repress"/>
</dbReference>
<dbReference type="InterPro" id="IPR020899">
    <property type="entry name" value="Arg_repress_C"/>
</dbReference>
<dbReference type="InterPro" id="IPR036251">
    <property type="entry name" value="Arg_repress_C_sf"/>
</dbReference>
<dbReference type="InterPro" id="IPR020900">
    <property type="entry name" value="Arg_repress_DNA-bd"/>
</dbReference>
<dbReference type="InterPro" id="IPR036388">
    <property type="entry name" value="WH-like_DNA-bd_sf"/>
</dbReference>
<dbReference type="InterPro" id="IPR036390">
    <property type="entry name" value="WH_DNA-bd_sf"/>
</dbReference>
<dbReference type="PANTHER" id="PTHR34471">
    <property type="entry name" value="ARGININE REPRESSOR"/>
    <property type="match status" value="1"/>
</dbReference>
<dbReference type="PANTHER" id="PTHR34471:SF1">
    <property type="entry name" value="ARGININE REPRESSOR"/>
    <property type="match status" value="1"/>
</dbReference>
<dbReference type="Pfam" id="PF01316">
    <property type="entry name" value="Arg_repressor"/>
    <property type="match status" value="1"/>
</dbReference>
<dbReference type="Pfam" id="PF02863">
    <property type="entry name" value="Arg_repressor_C"/>
    <property type="match status" value="1"/>
</dbReference>
<dbReference type="PRINTS" id="PR01467">
    <property type="entry name" value="ARGREPRESSOR"/>
</dbReference>
<dbReference type="SUPFAM" id="SSF55252">
    <property type="entry name" value="C-terminal domain of arginine repressor"/>
    <property type="match status" value="1"/>
</dbReference>
<dbReference type="SUPFAM" id="SSF46785">
    <property type="entry name" value="Winged helix' DNA-binding domain"/>
    <property type="match status" value="1"/>
</dbReference>
<name>ARGR_PELPB</name>